<keyword id="KW-0053">Apoptosis</keyword>
<keyword id="KW-0963">Cytoplasm</keyword>
<keyword id="KW-0458">Lysosome</keyword>
<keyword id="KW-0479">Metal-binding</keyword>
<keyword id="KW-0539">Nucleus</keyword>
<keyword id="KW-1185">Reference proteome</keyword>
<keyword id="KW-0862">Zinc</keyword>
<keyword id="KW-0863">Zinc-finger</keyword>
<reference key="1">
    <citation type="journal article" date="2004" name="Genome Res.">
        <title>The status, quality, and expansion of the NIH full-length cDNA project: the Mammalian Gene Collection (MGC).</title>
        <authorList>
            <consortium name="The MGC Project Team"/>
        </authorList>
    </citation>
    <scope>NUCLEOTIDE SEQUENCE [LARGE SCALE MRNA]</scope>
    <source>
        <tissue>Kidney</tissue>
    </source>
</reference>
<organism>
    <name type="scientific">Rattus norvegicus</name>
    <name type="common">Rat</name>
    <dbReference type="NCBI Taxonomy" id="10116"/>
    <lineage>
        <taxon>Eukaryota</taxon>
        <taxon>Metazoa</taxon>
        <taxon>Chordata</taxon>
        <taxon>Craniata</taxon>
        <taxon>Vertebrata</taxon>
        <taxon>Euteleostomi</taxon>
        <taxon>Mammalia</taxon>
        <taxon>Eutheria</taxon>
        <taxon>Euarchontoglires</taxon>
        <taxon>Glires</taxon>
        <taxon>Rodentia</taxon>
        <taxon>Myomorpha</taxon>
        <taxon>Muroidea</taxon>
        <taxon>Muridae</taxon>
        <taxon>Murinae</taxon>
        <taxon>Rattus</taxon>
    </lineage>
</organism>
<evidence type="ECO:0000250" key="1"/>
<evidence type="ECO:0000255" key="2">
    <source>
        <dbReference type="PROSITE-ProRule" id="PRU00091"/>
    </source>
</evidence>
<evidence type="ECO:0000255" key="3">
    <source>
        <dbReference type="PROSITE-ProRule" id="PRU00145"/>
    </source>
</evidence>
<evidence type="ECO:0000256" key="4">
    <source>
        <dbReference type="SAM" id="MobiDB-lite"/>
    </source>
</evidence>
<sequence>MVDHLANTEINSQRIAAVENCFGASGQPLALPGRVLLGEGVLTKECRKKAKPRIFFLFNDILVYGSIVLSKRKYRSQHIIPLEEVTLEPLPETLQAKNRWMIKTAKKSFVVSAASTTERQEWISHIEECVRRQLLATGRQPTTEHAAPWIPDKATDICMRCTQTRFSALTRRHHCRKCGFVVCAECSRERFLLPRLSPKPLRVCSLCYRELAAQKRREEAKERFRGSPGQLTHLGSTMCGASSGDDDDSDEDREGSGDGDWPTQVEFYASGVSWSAFHS</sequence>
<proteinExistence type="evidence at transcript level"/>
<protein>
    <recommendedName>
        <fullName>Pleckstrin homology domain-containing family F member 1</fullName>
        <shortName>PH domain-containing family F member 1</shortName>
    </recommendedName>
</protein>
<feature type="chain" id="PRO_0000251599" description="Pleckstrin homology domain-containing family F member 1">
    <location>
        <begin position="1"/>
        <end position="279"/>
    </location>
</feature>
<feature type="domain" description="PH" evidence="3">
    <location>
        <begin position="35"/>
        <end position="131"/>
    </location>
</feature>
<feature type="zinc finger region" description="FYVE-type" evidence="2">
    <location>
        <begin position="152"/>
        <end position="212"/>
    </location>
</feature>
<feature type="region of interest" description="Disordered" evidence="4">
    <location>
        <begin position="219"/>
        <end position="264"/>
    </location>
</feature>
<feature type="compositionally biased region" description="Acidic residues" evidence="4">
    <location>
        <begin position="244"/>
        <end position="253"/>
    </location>
</feature>
<feature type="binding site" evidence="2">
    <location>
        <position position="158"/>
    </location>
    <ligand>
        <name>Zn(2+)</name>
        <dbReference type="ChEBI" id="CHEBI:29105"/>
        <label>1</label>
    </ligand>
</feature>
<feature type="binding site" evidence="2">
    <location>
        <position position="161"/>
    </location>
    <ligand>
        <name>Zn(2+)</name>
        <dbReference type="ChEBI" id="CHEBI:29105"/>
        <label>1</label>
    </ligand>
</feature>
<feature type="binding site" evidence="2">
    <location>
        <position position="175"/>
    </location>
    <ligand>
        <name>Zn(2+)</name>
        <dbReference type="ChEBI" id="CHEBI:29105"/>
        <label>2</label>
    </ligand>
</feature>
<feature type="binding site" evidence="2">
    <location>
        <position position="178"/>
    </location>
    <ligand>
        <name>Zn(2+)</name>
        <dbReference type="ChEBI" id="CHEBI:29105"/>
        <label>2</label>
    </ligand>
</feature>
<feature type="binding site" evidence="2">
    <location>
        <position position="183"/>
    </location>
    <ligand>
        <name>Zn(2+)</name>
        <dbReference type="ChEBI" id="CHEBI:29105"/>
        <label>1</label>
    </ligand>
</feature>
<feature type="binding site" evidence="2">
    <location>
        <position position="186"/>
    </location>
    <ligand>
        <name>Zn(2+)</name>
        <dbReference type="ChEBI" id="CHEBI:29105"/>
        <label>1</label>
    </ligand>
</feature>
<feature type="binding site" evidence="2">
    <location>
        <position position="204"/>
    </location>
    <ligand>
        <name>Zn(2+)</name>
        <dbReference type="ChEBI" id="CHEBI:29105"/>
        <label>2</label>
    </ligand>
</feature>
<feature type="binding site" evidence="2">
    <location>
        <position position="207"/>
    </location>
    <ligand>
        <name>Zn(2+)</name>
        <dbReference type="ChEBI" id="CHEBI:29105"/>
        <label>2</label>
    </ligand>
</feature>
<comment type="function">
    <text evidence="1">May induce apoptosis through the lysosomal-mitochondrial pathway. Translocates to the lysosome initiating the permeabilization of lysosomal membrane (LMP) and resulting in the release of CTSD and CTSL to the cytoplasm. Triggers the caspase-independent apoptosis by altering mitochondrial membrane permeabilization (MMP) resulting in the release of PDCD8 (By similarity).</text>
</comment>
<comment type="subcellular location">
    <subcellularLocation>
        <location evidence="1">Nucleus</location>
    </subcellularLocation>
    <subcellularLocation>
        <location evidence="1">Cytoplasm</location>
        <location evidence="1">Perinuclear region</location>
    </subcellularLocation>
    <subcellularLocation>
        <location evidence="1">Lysosome</location>
    </subcellularLocation>
    <text evidence="1">Translocates to lysosome during apoptosis.</text>
</comment>
<comment type="domain">
    <text evidence="1">PH and FYVE-type zinc finger domains are required for lysosomal location.</text>
</comment>
<dbReference type="EMBL" id="BC079354">
    <property type="protein sequence ID" value="AAH79354.1"/>
    <property type="molecule type" value="mRNA"/>
</dbReference>
<dbReference type="RefSeq" id="NP_001013166.1">
    <property type="nucleotide sequence ID" value="NM_001013148.2"/>
</dbReference>
<dbReference type="RefSeq" id="XP_006228967.1">
    <property type="nucleotide sequence ID" value="XM_006228905.3"/>
</dbReference>
<dbReference type="SMR" id="Q68FU1"/>
<dbReference type="FunCoup" id="Q68FU1">
    <property type="interactions" value="29"/>
</dbReference>
<dbReference type="STRING" id="10116.ENSRNOP00000020352"/>
<dbReference type="PhosphoSitePlus" id="Q68FU1"/>
<dbReference type="PaxDb" id="10116-ENSRNOP00000020352"/>
<dbReference type="Ensembl" id="ENSRNOT00000020383.6">
    <property type="protein sequence ID" value="ENSRNOP00000020352.3"/>
    <property type="gene ID" value="ENSRNOG00000027724.5"/>
</dbReference>
<dbReference type="Ensembl" id="ENSRNOT00000108120.1">
    <property type="protein sequence ID" value="ENSRNOP00000081760.1"/>
    <property type="gene ID" value="ENSRNOG00000027724.5"/>
</dbReference>
<dbReference type="Ensembl" id="ENSRNOT00000113101.1">
    <property type="protein sequence ID" value="ENSRNOP00000091851.1"/>
    <property type="gene ID" value="ENSRNOG00000027724.5"/>
</dbReference>
<dbReference type="GeneID" id="308543"/>
<dbReference type="KEGG" id="rno:308543"/>
<dbReference type="UCSC" id="RGD:1310544">
    <property type="organism name" value="rat"/>
</dbReference>
<dbReference type="AGR" id="RGD:1310544"/>
<dbReference type="CTD" id="79156"/>
<dbReference type="RGD" id="1310544">
    <property type="gene designation" value="Plekhf1"/>
</dbReference>
<dbReference type="eggNOG" id="KOG1729">
    <property type="taxonomic scope" value="Eukaryota"/>
</dbReference>
<dbReference type="GeneTree" id="ENSGT00940000160728"/>
<dbReference type="HOGENOM" id="CLU_064864_2_0_1"/>
<dbReference type="InParanoid" id="Q68FU1"/>
<dbReference type="OMA" id="DDKADQW"/>
<dbReference type="OrthoDB" id="56181at9989"/>
<dbReference type="PhylomeDB" id="Q68FU1"/>
<dbReference type="TreeFam" id="TF315235"/>
<dbReference type="PRO" id="PR:Q68FU1"/>
<dbReference type="Proteomes" id="UP000002494">
    <property type="component" value="Chromosome 1"/>
</dbReference>
<dbReference type="Bgee" id="ENSRNOG00000027724">
    <property type="expression patterns" value="Expressed in heart and 20 other cell types or tissues"/>
</dbReference>
<dbReference type="GO" id="GO:0005769">
    <property type="term" value="C:early endosome"/>
    <property type="evidence" value="ECO:0000318"/>
    <property type="project" value="GO_Central"/>
</dbReference>
<dbReference type="GO" id="GO:0005768">
    <property type="term" value="C:endosome"/>
    <property type="evidence" value="ECO:0000266"/>
    <property type="project" value="RGD"/>
</dbReference>
<dbReference type="GO" id="GO:0005764">
    <property type="term" value="C:lysosome"/>
    <property type="evidence" value="ECO:0000266"/>
    <property type="project" value="RGD"/>
</dbReference>
<dbReference type="GO" id="GO:0005634">
    <property type="term" value="C:nucleus"/>
    <property type="evidence" value="ECO:0007669"/>
    <property type="project" value="UniProtKB-SubCell"/>
</dbReference>
<dbReference type="GO" id="GO:0048471">
    <property type="term" value="C:perinuclear region of cytoplasm"/>
    <property type="evidence" value="ECO:0007669"/>
    <property type="project" value="UniProtKB-SubCell"/>
</dbReference>
<dbReference type="GO" id="GO:0035091">
    <property type="term" value="F:phosphatidylinositol binding"/>
    <property type="evidence" value="ECO:0000318"/>
    <property type="project" value="GO_Central"/>
</dbReference>
<dbReference type="GO" id="GO:0032266">
    <property type="term" value="F:phosphatidylinositol-3-phosphate binding"/>
    <property type="evidence" value="ECO:0000266"/>
    <property type="project" value="RGD"/>
</dbReference>
<dbReference type="GO" id="GO:0070273">
    <property type="term" value="F:phosphatidylinositol-4-phosphate binding"/>
    <property type="evidence" value="ECO:0000266"/>
    <property type="project" value="RGD"/>
</dbReference>
<dbReference type="GO" id="GO:0010314">
    <property type="term" value="F:phosphatidylinositol-5-phosphate binding"/>
    <property type="evidence" value="ECO:0000266"/>
    <property type="project" value="RGD"/>
</dbReference>
<dbReference type="GO" id="GO:0008270">
    <property type="term" value="F:zinc ion binding"/>
    <property type="evidence" value="ECO:0007669"/>
    <property type="project" value="UniProtKB-KW"/>
</dbReference>
<dbReference type="GO" id="GO:0006915">
    <property type="term" value="P:apoptotic process"/>
    <property type="evidence" value="ECO:0007669"/>
    <property type="project" value="UniProtKB-KW"/>
</dbReference>
<dbReference type="GO" id="GO:0007032">
    <property type="term" value="P:endosome organization"/>
    <property type="evidence" value="ECO:0000266"/>
    <property type="project" value="RGD"/>
</dbReference>
<dbReference type="GO" id="GO:0008333">
    <property type="term" value="P:endosome to lysosome transport"/>
    <property type="evidence" value="ECO:0000318"/>
    <property type="project" value="GO_Central"/>
</dbReference>
<dbReference type="GO" id="GO:0010508">
    <property type="term" value="P:positive regulation of autophagy"/>
    <property type="evidence" value="ECO:0000266"/>
    <property type="project" value="RGD"/>
</dbReference>
<dbReference type="GO" id="GO:0072659">
    <property type="term" value="P:protein localization to plasma membrane"/>
    <property type="evidence" value="ECO:0000266"/>
    <property type="project" value="RGD"/>
</dbReference>
<dbReference type="GO" id="GO:0016050">
    <property type="term" value="P:vesicle organization"/>
    <property type="evidence" value="ECO:0000266"/>
    <property type="project" value="RGD"/>
</dbReference>
<dbReference type="CDD" id="cd15754">
    <property type="entry name" value="FYVE_PKHF1"/>
    <property type="match status" value="1"/>
</dbReference>
<dbReference type="CDD" id="cd01218">
    <property type="entry name" value="PH_Phafin2-like"/>
    <property type="match status" value="1"/>
</dbReference>
<dbReference type="FunFam" id="2.30.29.30:FF:000247">
    <property type="entry name" value="pleckstrin homology domain-containing family F member 1"/>
    <property type="match status" value="1"/>
</dbReference>
<dbReference type="FunFam" id="3.30.40.10:FF:000284">
    <property type="entry name" value="pleckstrin homology domain-containing family F member 1"/>
    <property type="match status" value="1"/>
</dbReference>
<dbReference type="Gene3D" id="2.30.29.30">
    <property type="entry name" value="Pleckstrin-homology domain (PH domain)/Phosphotyrosine-binding domain (PTB)"/>
    <property type="match status" value="1"/>
</dbReference>
<dbReference type="Gene3D" id="3.30.40.10">
    <property type="entry name" value="Zinc/RING finger domain, C3HC4 (zinc finger)"/>
    <property type="match status" value="1"/>
</dbReference>
<dbReference type="InterPro" id="IPR011993">
    <property type="entry name" value="PH-like_dom_sf"/>
</dbReference>
<dbReference type="InterPro" id="IPR001849">
    <property type="entry name" value="PH_domain"/>
</dbReference>
<dbReference type="InterPro" id="IPR051765">
    <property type="entry name" value="PH_domain-containing_F"/>
</dbReference>
<dbReference type="InterPro" id="IPR037871">
    <property type="entry name" value="PH_Phafin"/>
</dbReference>
<dbReference type="InterPro" id="IPR042762">
    <property type="entry name" value="PKHF1_FYVE"/>
</dbReference>
<dbReference type="InterPro" id="IPR000306">
    <property type="entry name" value="Znf_FYVE"/>
</dbReference>
<dbReference type="InterPro" id="IPR017455">
    <property type="entry name" value="Znf_FYVE-rel"/>
</dbReference>
<dbReference type="InterPro" id="IPR011011">
    <property type="entry name" value="Znf_FYVE_PHD"/>
</dbReference>
<dbReference type="InterPro" id="IPR013083">
    <property type="entry name" value="Znf_RING/FYVE/PHD"/>
</dbReference>
<dbReference type="PANTHER" id="PTHR46280:SF2">
    <property type="entry name" value="PLECKSTRIN HOMOLOGY DOMAIN-CONTAINING FAMILY F MEMBER 1"/>
    <property type="match status" value="1"/>
</dbReference>
<dbReference type="PANTHER" id="PTHR46280">
    <property type="entry name" value="PLECKSTRIN HOMOLOGY DOMAIN-CONTAINING FAMILY F MEMBER 2-RELATED"/>
    <property type="match status" value="1"/>
</dbReference>
<dbReference type="Pfam" id="PF01363">
    <property type="entry name" value="FYVE"/>
    <property type="match status" value="1"/>
</dbReference>
<dbReference type="Pfam" id="PF00169">
    <property type="entry name" value="PH"/>
    <property type="match status" value="1"/>
</dbReference>
<dbReference type="SMART" id="SM00064">
    <property type="entry name" value="FYVE"/>
    <property type="match status" value="1"/>
</dbReference>
<dbReference type="SMART" id="SM00233">
    <property type="entry name" value="PH"/>
    <property type="match status" value="1"/>
</dbReference>
<dbReference type="SUPFAM" id="SSF57903">
    <property type="entry name" value="FYVE/PHD zinc finger"/>
    <property type="match status" value="1"/>
</dbReference>
<dbReference type="SUPFAM" id="SSF50729">
    <property type="entry name" value="PH domain-like"/>
    <property type="match status" value="1"/>
</dbReference>
<dbReference type="PROSITE" id="PS50003">
    <property type="entry name" value="PH_DOMAIN"/>
    <property type="match status" value="1"/>
</dbReference>
<dbReference type="PROSITE" id="PS50178">
    <property type="entry name" value="ZF_FYVE"/>
    <property type="match status" value="1"/>
</dbReference>
<accession>Q68FU1</accession>
<gene>
    <name type="primary">Plekhf1</name>
</gene>
<name>PKHF1_RAT</name>